<evidence type="ECO:0000255" key="1">
    <source>
        <dbReference type="HAMAP-Rule" id="MF_01393"/>
    </source>
</evidence>
<accession>A8Y9G4</accession>
<gene>
    <name evidence="1" type="primary">atpI</name>
    <name type="ordered locus">LopeCp027</name>
</gene>
<organism>
    <name type="scientific">Lolium perenne</name>
    <name type="common">Perennial ryegrass</name>
    <dbReference type="NCBI Taxonomy" id="4522"/>
    <lineage>
        <taxon>Eukaryota</taxon>
        <taxon>Viridiplantae</taxon>
        <taxon>Streptophyta</taxon>
        <taxon>Embryophyta</taxon>
        <taxon>Tracheophyta</taxon>
        <taxon>Spermatophyta</taxon>
        <taxon>Magnoliopsida</taxon>
        <taxon>Liliopsida</taxon>
        <taxon>Poales</taxon>
        <taxon>Poaceae</taxon>
        <taxon>BOP clade</taxon>
        <taxon>Pooideae</taxon>
        <taxon>Poodae</taxon>
        <taxon>Poeae</taxon>
        <taxon>Poeae Chloroplast Group 2 (Poeae type)</taxon>
        <taxon>Loliodinae</taxon>
        <taxon>Loliinae</taxon>
        <taxon>Lolium</taxon>
    </lineage>
</organism>
<feature type="chain" id="PRO_0000362570" description="ATP synthase subunit a, chloroplastic">
    <location>
        <begin position="1"/>
        <end position="247"/>
    </location>
</feature>
<feature type="transmembrane region" description="Helical" evidence="1">
    <location>
        <begin position="38"/>
        <end position="58"/>
    </location>
</feature>
<feature type="transmembrane region" description="Helical" evidence="1">
    <location>
        <begin position="95"/>
        <end position="115"/>
    </location>
</feature>
<feature type="transmembrane region" description="Helical" evidence="1">
    <location>
        <begin position="134"/>
        <end position="154"/>
    </location>
</feature>
<feature type="transmembrane region" description="Helical" evidence="1">
    <location>
        <begin position="199"/>
        <end position="219"/>
    </location>
</feature>
<feature type="transmembrane region" description="Helical" evidence="1">
    <location>
        <begin position="220"/>
        <end position="240"/>
    </location>
</feature>
<dbReference type="EMBL" id="AM777385">
    <property type="protein sequence ID" value="CAO85970.1"/>
    <property type="molecule type" value="Genomic_DNA"/>
</dbReference>
<dbReference type="RefSeq" id="YP_001531277.1">
    <property type="nucleotide sequence ID" value="NC_009950.1"/>
</dbReference>
<dbReference type="SMR" id="A8Y9G4"/>
<dbReference type="GeneID" id="5696542"/>
<dbReference type="KEGG" id="lper:5696542"/>
<dbReference type="GO" id="GO:0009535">
    <property type="term" value="C:chloroplast thylakoid membrane"/>
    <property type="evidence" value="ECO:0007669"/>
    <property type="project" value="UniProtKB-SubCell"/>
</dbReference>
<dbReference type="GO" id="GO:0005886">
    <property type="term" value="C:plasma membrane"/>
    <property type="evidence" value="ECO:0007669"/>
    <property type="project" value="UniProtKB-UniRule"/>
</dbReference>
<dbReference type="GO" id="GO:0045259">
    <property type="term" value="C:proton-transporting ATP synthase complex"/>
    <property type="evidence" value="ECO:0007669"/>
    <property type="project" value="UniProtKB-KW"/>
</dbReference>
<dbReference type="GO" id="GO:0046933">
    <property type="term" value="F:proton-transporting ATP synthase activity, rotational mechanism"/>
    <property type="evidence" value="ECO:0007669"/>
    <property type="project" value="UniProtKB-UniRule"/>
</dbReference>
<dbReference type="CDD" id="cd00310">
    <property type="entry name" value="ATP-synt_Fo_a_6"/>
    <property type="match status" value="1"/>
</dbReference>
<dbReference type="FunFam" id="1.20.120.220:FF:000001">
    <property type="entry name" value="ATP synthase subunit a, chloroplastic"/>
    <property type="match status" value="1"/>
</dbReference>
<dbReference type="Gene3D" id="1.20.120.220">
    <property type="entry name" value="ATP synthase, F0 complex, subunit A"/>
    <property type="match status" value="1"/>
</dbReference>
<dbReference type="HAMAP" id="MF_01393">
    <property type="entry name" value="ATP_synth_a_bact"/>
    <property type="match status" value="1"/>
</dbReference>
<dbReference type="InterPro" id="IPR045082">
    <property type="entry name" value="ATP_syn_F0_a_bact/chloroplast"/>
</dbReference>
<dbReference type="InterPro" id="IPR000568">
    <property type="entry name" value="ATP_synth_F0_asu"/>
</dbReference>
<dbReference type="InterPro" id="IPR023011">
    <property type="entry name" value="ATP_synth_F0_asu_AS"/>
</dbReference>
<dbReference type="InterPro" id="IPR035908">
    <property type="entry name" value="F0_ATP_A_sf"/>
</dbReference>
<dbReference type="NCBIfam" id="TIGR01131">
    <property type="entry name" value="ATP_synt_6_or_A"/>
    <property type="match status" value="1"/>
</dbReference>
<dbReference type="PANTHER" id="PTHR42823">
    <property type="entry name" value="ATP SYNTHASE SUBUNIT A, CHLOROPLASTIC"/>
    <property type="match status" value="1"/>
</dbReference>
<dbReference type="PANTHER" id="PTHR42823:SF3">
    <property type="entry name" value="ATP SYNTHASE SUBUNIT A, CHLOROPLASTIC"/>
    <property type="match status" value="1"/>
</dbReference>
<dbReference type="Pfam" id="PF00119">
    <property type="entry name" value="ATP-synt_A"/>
    <property type="match status" value="1"/>
</dbReference>
<dbReference type="PRINTS" id="PR00123">
    <property type="entry name" value="ATPASEA"/>
</dbReference>
<dbReference type="SUPFAM" id="SSF81336">
    <property type="entry name" value="F1F0 ATP synthase subunit A"/>
    <property type="match status" value="1"/>
</dbReference>
<dbReference type="PROSITE" id="PS00449">
    <property type="entry name" value="ATPASE_A"/>
    <property type="match status" value="1"/>
</dbReference>
<comment type="function">
    <text evidence="1">Key component of the proton channel; it plays a direct role in the translocation of protons across the membrane.</text>
</comment>
<comment type="subunit">
    <text evidence="1">F-type ATPases have 2 components, CF(1) - the catalytic core - and CF(0) - the membrane proton channel. CF(1) has five subunits: alpha(3), beta(3), gamma(1), delta(1), epsilon(1). CF(0) has four main subunits: a, b, b' and c.</text>
</comment>
<comment type="subcellular location">
    <subcellularLocation>
        <location evidence="1">Plastid</location>
        <location evidence="1">Chloroplast thylakoid membrane</location>
        <topology evidence="1">Multi-pass membrane protein</topology>
    </subcellularLocation>
</comment>
<comment type="similarity">
    <text evidence="1">Belongs to the ATPase A chain family.</text>
</comment>
<geneLocation type="chloroplast"/>
<proteinExistence type="inferred from homology"/>
<reference key="1">
    <citation type="journal article" date="2008" name="PLoS ONE">
        <title>An optimized chloroplast DNA extraction protocol for grasses (Poaceae) proves suitable for whole plastid genome sequencing and SNP detection.</title>
        <authorList>
            <person name="Diekmann K."/>
            <person name="Hodkinson T.R."/>
            <person name="Fricke E."/>
            <person name="Barth S."/>
        </authorList>
    </citation>
    <scope>NUCLEOTIDE SEQUENCE [LARGE SCALE GENOMIC DNA]</scope>
    <source>
        <strain>cv. Cashel</strain>
    </source>
</reference>
<protein>
    <recommendedName>
        <fullName evidence="1">ATP synthase subunit a, chloroplastic</fullName>
    </recommendedName>
    <alternativeName>
        <fullName evidence="1">ATP synthase F0 sector subunit a</fullName>
    </alternativeName>
    <alternativeName>
        <fullName evidence="1">F-ATPase subunit IV</fullName>
    </alternativeName>
</protein>
<sequence>MNIIPCSIKTLKGLYDISGVEVGQHFYWQIGSFQIHAQVLITSWVVITILLGSVVIAVRNPQTVPMDGQNFFEYVLEFIRDLSKTQIGEEYGPWVPFIGTMFLFIFVSNWSGALLPWKIIELPHGELAAPTNDINTTVALALLTSAAYFYAGLSKKGLSYFEKYIKPTPILLPINILEDFTKPLSLSFRLFGNILADELVVVVLVSLVPLVVPIPVMFLGLFTSGIQALIFATLAAAYIGESMEGHH</sequence>
<keyword id="KW-0066">ATP synthesis</keyword>
<keyword id="KW-0138">CF(0)</keyword>
<keyword id="KW-0150">Chloroplast</keyword>
<keyword id="KW-0375">Hydrogen ion transport</keyword>
<keyword id="KW-0406">Ion transport</keyword>
<keyword id="KW-0472">Membrane</keyword>
<keyword id="KW-0934">Plastid</keyword>
<keyword id="KW-0793">Thylakoid</keyword>
<keyword id="KW-0812">Transmembrane</keyword>
<keyword id="KW-1133">Transmembrane helix</keyword>
<keyword id="KW-0813">Transport</keyword>
<name>ATPI_LOLPR</name>